<accession>Q0K661</accession>
<evidence type="ECO:0000255" key="1">
    <source>
        <dbReference type="HAMAP-Rule" id="MF_00142"/>
    </source>
</evidence>
<name>CYAY_CUPNH</name>
<proteinExistence type="inferred from homology"/>
<comment type="function">
    <text evidence="1">Involved in iron-sulfur (Fe-S) cluster assembly. May act as a regulator of Fe-S biogenesis.</text>
</comment>
<comment type="similarity">
    <text evidence="1">Belongs to the frataxin family.</text>
</comment>
<sequence length="111" mass="11986">MPPLSESEFLALATQELDRIEATVEAAADAADADIEISRTGNVMELEFENGTKIIINSQAPMQELWVAARAGGFHFRRDGERWIDTRNGGELYAALSGYVSEQAGAALTLG</sequence>
<gene>
    <name evidence="1" type="primary">cyaY</name>
    <name type="ordered locus">H16_A3442</name>
</gene>
<organism>
    <name type="scientific">Cupriavidus necator (strain ATCC 17699 / DSM 428 / KCTC 22496 / NCIMB 10442 / H16 / Stanier 337)</name>
    <name type="common">Ralstonia eutropha</name>
    <dbReference type="NCBI Taxonomy" id="381666"/>
    <lineage>
        <taxon>Bacteria</taxon>
        <taxon>Pseudomonadati</taxon>
        <taxon>Pseudomonadota</taxon>
        <taxon>Betaproteobacteria</taxon>
        <taxon>Burkholderiales</taxon>
        <taxon>Burkholderiaceae</taxon>
        <taxon>Cupriavidus</taxon>
    </lineage>
</organism>
<feature type="chain" id="PRO_1000010947" description="Iron-sulfur cluster assembly protein CyaY">
    <location>
        <begin position="1"/>
        <end position="111"/>
    </location>
</feature>
<protein>
    <recommendedName>
        <fullName evidence="1">Iron-sulfur cluster assembly protein CyaY</fullName>
    </recommendedName>
</protein>
<keyword id="KW-0408">Iron</keyword>
<keyword id="KW-0479">Metal-binding</keyword>
<keyword id="KW-1185">Reference proteome</keyword>
<reference key="1">
    <citation type="journal article" date="2006" name="Nat. Biotechnol.">
        <title>Genome sequence of the bioplastic-producing 'Knallgas' bacterium Ralstonia eutropha H16.</title>
        <authorList>
            <person name="Pohlmann A."/>
            <person name="Fricke W.F."/>
            <person name="Reinecke F."/>
            <person name="Kusian B."/>
            <person name="Liesegang H."/>
            <person name="Cramm R."/>
            <person name="Eitinger T."/>
            <person name="Ewering C."/>
            <person name="Poetter M."/>
            <person name="Schwartz E."/>
            <person name="Strittmatter A."/>
            <person name="Voss I."/>
            <person name="Gottschalk G."/>
            <person name="Steinbuechel A."/>
            <person name="Friedrich B."/>
            <person name="Bowien B."/>
        </authorList>
    </citation>
    <scope>NUCLEOTIDE SEQUENCE [LARGE SCALE GENOMIC DNA]</scope>
    <source>
        <strain>ATCC 17699 / DSM 428 / KCTC 22496 / NCIMB 10442 / H16 / Stanier 337</strain>
    </source>
</reference>
<dbReference type="EMBL" id="AM260479">
    <property type="protein sequence ID" value="CAJ94510.1"/>
    <property type="molecule type" value="Genomic_DNA"/>
</dbReference>
<dbReference type="RefSeq" id="WP_010812358.1">
    <property type="nucleotide sequence ID" value="NZ_CP039287.1"/>
</dbReference>
<dbReference type="SMR" id="Q0K661"/>
<dbReference type="STRING" id="381666.H16_A3442"/>
<dbReference type="GeneID" id="34310681"/>
<dbReference type="KEGG" id="reh:H16_A3442"/>
<dbReference type="eggNOG" id="COG1965">
    <property type="taxonomic scope" value="Bacteria"/>
</dbReference>
<dbReference type="HOGENOM" id="CLU_080880_3_0_4"/>
<dbReference type="OrthoDB" id="285675at2"/>
<dbReference type="Proteomes" id="UP000008210">
    <property type="component" value="Chromosome 1"/>
</dbReference>
<dbReference type="GO" id="GO:0005829">
    <property type="term" value="C:cytosol"/>
    <property type="evidence" value="ECO:0007669"/>
    <property type="project" value="TreeGrafter"/>
</dbReference>
<dbReference type="GO" id="GO:0008199">
    <property type="term" value="F:ferric iron binding"/>
    <property type="evidence" value="ECO:0007669"/>
    <property type="project" value="InterPro"/>
</dbReference>
<dbReference type="GO" id="GO:0008198">
    <property type="term" value="F:ferrous iron binding"/>
    <property type="evidence" value="ECO:0007669"/>
    <property type="project" value="TreeGrafter"/>
</dbReference>
<dbReference type="GO" id="GO:0016226">
    <property type="term" value="P:iron-sulfur cluster assembly"/>
    <property type="evidence" value="ECO:0007669"/>
    <property type="project" value="UniProtKB-UniRule"/>
</dbReference>
<dbReference type="Gene3D" id="3.30.920.10">
    <property type="entry name" value="Frataxin/CyaY"/>
    <property type="match status" value="1"/>
</dbReference>
<dbReference type="HAMAP" id="MF_00142">
    <property type="entry name" value="CyaY"/>
    <property type="match status" value="1"/>
</dbReference>
<dbReference type="InterPro" id="IPR047584">
    <property type="entry name" value="CyaY"/>
</dbReference>
<dbReference type="InterPro" id="IPR002908">
    <property type="entry name" value="Frataxin/CyaY"/>
</dbReference>
<dbReference type="InterPro" id="IPR036524">
    <property type="entry name" value="Frataxin/CyaY_sf"/>
</dbReference>
<dbReference type="InterPro" id="IPR020895">
    <property type="entry name" value="Frataxin_CS"/>
</dbReference>
<dbReference type="NCBIfam" id="TIGR03421">
    <property type="entry name" value="FeS_CyaY"/>
    <property type="match status" value="1"/>
</dbReference>
<dbReference type="PANTHER" id="PTHR16821">
    <property type="entry name" value="FRATAXIN"/>
    <property type="match status" value="1"/>
</dbReference>
<dbReference type="PANTHER" id="PTHR16821:SF2">
    <property type="entry name" value="FRATAXIN, MITOCHONDRIAL"/>
    <property type="match status" value="1"/>
</dbReference>
<dbReference type="Pfam" id="PF01491">
    <property type="entry name" value="Frataxin_Cyay"/>
    <property type="match status" value="1"/>
</dbReference>
<dbReference type="SMART" id="SM01219">
    <property type="entry name" value="Frataxin_Cyay"/>
    <property type="match status" value="1"/>
</dbReference>
<dbReference type="SUPFAM" id="SSF55387">
    <property type="entry name" value="Frataxin/Nqo15-like"/>
    <property type="match status" value="1"/>
</dbReference>
<dbReference type="PROSITE" id="PS01344">
    <property type="entry name" value="FRATAXIN_1"/>
    <property type="match status" value="1"/>
</dbReference>
<dbReference type="PROSITE" id="PS50810">
    <property type="entry name" value="FRATAXIN_2"/>
    <property type="match status" value="1"/>
</dbReference>